<sequence length="202" mass="22504">MPIGVPKVPFRNPGEEGAVWVDVYNRLHRERLLFLGQGVDSEISNQLVGLMVYLSIEDDTRDLYLFINSPGGWVIPGIAIYDTMQFVPPDVHTICMGLAASMGSFLLAGGEITKRLAFPHARVMIHQPASSFYEAQTGEFILEAEELLKLRETITRVYAQRTGNPLWVVFEDMERDVFMSATEAQAHGIVDLVAVENTGDFA</sequence>
<name>CLPP_ILLOL</name>
<comment type="function">
    <text evidence="1">Cleaves peptides in various proteins in a process that requires ATP hydrolysis. Has a chymotrypsin-like activity. Plays a major role in the degradation of misfolded proteins.</text>
</comment>
<comment type="catalytic activity">
    <reaction evidence="1">
        <text>Hydrolysis of proteins to small peptides in the presence of ATP and magnesium. alpha-casein is the usual test substrate. In the absence of ATP, only oligopeptides shorter than five residues are hydrolyzed (such as succinyl-Leu-Tyr-|-NHMec, and Leu-Tyr-Leu-|-Tyr-Trp, in which cleavage of the -Tyr-|-Leu- and -Tyr-|-Trp bonds also occurs).</text>
        <dbReference type="EC" id="3.4.21.92"/>
    </reaction>
</comment>
<comment type="subunit">
    <text>Component of the chloroplastic Clp protease core complex.</text>
</comment>
<comment type="subcellular location">
    <subcellularLocation>
        <location evidence="1">Plastid</location>
        <location evidence="1">Chloroplast stroma</location>
    </subcellularLocation>
</comment>
<comment type="similarity">
    <text evidence="1">Belongs to the peptidase S14 family.</text>
</comment>
<organism>
    <name type="scientific">Illicium oligandrum</name>
    <name type="common">Star anise</name>
    <dbReference type="NCBI Taxonomy" id="145286"/>
    <lineage>
        <taxon>Eukaryota</taxon>
        <taxon>Viridiplantae</taxon>
        <taxon>Streptophyta</taxon>
        <taxon>Embryophyta</taxon>
        <taxon>Tracheophyta</taxon>
        <taxon>Spermatophyta</taxon>
        <taxon>Magnoliopsida</taxon>
        <taxon>Austrobaileyales</taxon>
        <taxon>Schisandraceae</taxon>
        <taxon>Illicium</taxon>
    </lineage>
</organism>
<dbReference type="EC" id="3.4.21.92" evidence="1"/>
<dbReference type="EMBL" id="EF380354">
    <property type="protein sequence ID" value="ABQ52543.1"/>
    <property type="molecule type" value="Genomic_DNA"/>
</dbReference>
<dbReference type="RefSeq" id="YP_001294295.1">
    <property type="nucleotide sequence ID" value="NC_009600.1"/>
</dbReference>
<dbReference type="SMR" id="A6MMW9"/>
<dbReference type="MEROPS" id="S14.002"/>
<dbReference type="GeneID" id="5236695"/>
<dbReference type="GO" id="GO:0009570">
    <property type="term" value="C:chloroplast stroma"/>
    <property type="evidence" value="ECO:0007669"/>
    <property type="project" value="UniProtKB-SubCell"/>
</dbReference>
<dbReference type="GO" id="GO:0009368">
    <property type="term" value="C:endopeptidase Clp complex"/>
    <property type="evidence" value="ECO:0007669"/>
    <property type="project" value="TreeGrafter"/>
</dbReference>
<dbReference type="GO" id="GO:0004176">
    <property type="term" value="F:ATP-dependent peptidase activity"/>
    <property type="evidence" value="ECO:0007669"/>
    <property type="project" value="InterPro"/>
</dbReference>
<dbReference type="GO" id="GO:0051117">
    <property type="term" value="F:ATPase binding"/>
    <property type="evidence" value="ECO:0007669"/>
    <property type="project" value="TreeGrafter"/>
</dbReference>
<dbReference type="GO" id="GO:0004252">
    <property type="term" value="F:serine-type endopeptidase activity"/>
    <property type="evidence" value="ECO:0007669"/>
    <property type="project" value="UniProtKB-UniRule"/>
</dbReference>
<dbReference type="GO" id="GO:0006515">
    <property type="term" value="P:protein quality control for misfolded or incompletely synthesized proteins"/>
    <property type="evidence" value="ECO:0007669"/>
    <property type="project" value="TreeGrafter"/>
</dbReference>
<dbReference type="CDD" id="cd07017">
    <property type="entry name" value="S14_ClpP_2"/>
    <property type="match status" value="1"/>
</dbReference>
<dbReference type="FunFam" id="3.90.226.10:FF:000006">
    <property type="entry name" value="ATP-dependent Clp protease proteolytic subunit"/>
    <property type="match status" value="1"/>
</dbReference>
<dbReference type="Gene3D" id="3.90.226.10">
    <property type="entry name" value="2-enoyl-CoA Hydratase, Chain A, domain 1"/>
    <property type="match status" value="1"/>
</dbReference>
<dbReference type="HAMAP" id="MF_00444">
    <property type="entry name" value="ClpP"/>
    <property type="match status" value="1"/>
</dbReference>
<dbReference type="InterPro" id="IPR001907">
    <property type="entry name" value="ClpP"/>
</dbReference>
<dbReference type="InterPro" id="IPR029045">
    <property type="entry name" value="ClpP/crotonase-like_dom_sf"/>
</dbReference>
<dbReference type="InterPro" id="IPR023562">
    <property type="entry name" value="ClpP/TepA"/>
</dbReference>
<dbReference type="InterPro" id="IPR033135">
    <property type="entry name" value="ClpP_His_AS"/>
</dbReference>
<dbReference type="InterPro" id="IPR018215">
    <property type="entry name" value="ClpP_Ser_AS"/>
</dbReference>
<dbReference type="PANTHER" id="PTHR10381">
    <property type="entry name" value="ATP-DEPENDENT CLP PROTEASE PROTEOLYTIC SUBUNIT"/>
    <property type="match status" value="1"/>
</dbReference>
<dbReference type="PANTHER" id="PTHR10381:SF15">
    <property type="entry name" value="CHLOROPLASTIC ATP-DEPENDENT CLP PROTEASE PROTEOLYTIC SUBUNIT 1"/>
    <property type="match status" value="1"/>
</dbReference>
<dbReference type="Pfam" id="PF00574">
    <property type="entry name" value="CLP_protease"/>
    <property type="match status" value="1"/>
</dbReference>
<dbReference type="PRINTS" id="PR00127">
    <property type="entry name" value="CLPPROTEASEP"/>
</dbReference>
<dbReference type="SUPFAM" id="SSF52096">
    <property type="entry name" value="ClpP/crotonase"/>
    <property type="match status" value="1"/>
</dbReference>
<dbReference type="PROSITE" id="PS00382">
    <property type="entry name" value="CLP_PROTEASE_HIS"/>
    <property type="match status" value="1"/>
</dbReference>
<dbReference type="PROSITE" id="PS00381">
    <property type="entry name" value="CLP_PROTEASE_SER"/>
    <property type="match status" value="1"/>
</dbReference>
<accession>A6MMW9</accession>
<evidence type="ECO:0000255" key="1">
    <source>
        <dbReference type="HAMAP-Rule" id="MF_00444"/>
    </source>
</evidence>
<gene>
    <name evidence="1" type="primary">clpP</name>
</gene>
<reference key="1">
    <citation type="journal article" date="2007" name="Mol. Phylogenet. Evol.">
        <title>Phylogenetic and evolutionary implications of complete chloroplast genome sequences of four early-diverging angiosperms: Buxus (Buxaceae), Chloranthus (Chloranthaceae), Dioscorea (Dioscoreaceae), and Illicium (Schisandraceae).</title>
        <authorList>
            <person name="Hansen D.R."/>
            <person name="Dastidar S.G."/>
            <person name="Cai Z."/>
            <person name="Penaflor C."/>
            <person name="Kuehl J.V."/>
            <person name="Boore J.L."/>
            <person name="Jansen R.K."/>
        </authorList>
    </citation>
    <scope>NUCLEOTIDE SEQUENCE [LARGE SCALE GENOMIC DNA]</scope>
</reference>
<keyword id="KW-0150">Chloroplast</keyword>
<keyword id="KW-0378">Hydrolase</keyword>
<keyword id="KW-0934">Plastid</keyword>
<keyword id="KW-0645">Protease</keyword>
<keyword id="KW-0720">Serine protease</keyword>
<protein>
    <recommendedName>
        <fullName evidence="1">ATP-dependent Clp protease proteolytic subunit</fullName>
        <ecNumber evidence="1">3.4.21.92</ecNumber>
    </recommendedName>
    <alternativeName>
        <fullName evidence="1">Endopeptidase Clp</fullName>
    </alternativeName>
</protein>
<geneLocation type="chloroplast"/>
<feature type="chain" id="PRO_0000309301" description="ATP-dependent Clp protease proteolytic subunit">
    <location>
        <begin position="1"/>
        <end position="202"/>
    </location>
</feature>
<feature type="active site" description="Nucleophile" evidence="1">
    <location>
        <position position="101"/>
    </location>
</feature>
<feature type="active site" evidence="1">
    <location>
        <position position="126"/>
    </location>
</feature>
<proteinExistence type="inferred from homology"/>